<dbReference type="EMBL" id="M29945">
    <property type="protein sequence ID" value="AAA88694.1"/>
    <property type="molecule type" value="Genomic_DNA"/>
</dbReference>
<dbReference type="EMBL" id="AY004311">
    <property type="protein sequence ID" value="AAF97354.1"/>
    <property type="molecule type" value="Genomic_DNA"/>
</dbReference>
<dbReference type="PIR" id="A35123">
    <property type="entry name" value="A35123"/>
</dbReference>
<dbReference type="RefSeq" id="WP_005166773.1">
    <property type="nucleotide sequence ID" value="NZ_NWMR01000104.1"/>
</dbReference>
<dbReference type="SMR" id="P16454"/>
<dbReference type="KEGG" id="yew:CH47_1252"/>
<dbReference type="GO" id="GO:0009279">
    <property type="term" value="C:cell outer membrane"/>
    <property type="evidence" value="ECO:0007669"/>
    <property type="project" value="UniProtKB-SubCell"/>
</dbReference>
<dbReference type="GO" id="GO:0044384">
    <property type="term" value="C:host outer membrane"/>
    <property type="evidence" value="ECO:0007669"/>
    <property type="project" value="InterPro"/>
</dbReference>
<dbReference type="GO" id="GO:0042784">
    <property type="term" value="P:symbiont-mediated suppression of host complement activation"/>
    <property type="evidence" value="ECO:0000269"/>
    <property type="project" value="SigSci"/>
</dbReference>
<dbReference type="Gene3D" id="2.40.160.20">
    <property type="match status" value="1"/>
</dbReference>
<dbReference type="InterPro" id="IPR051723">
    <property type="entry name" value="Bact_OM_Invasion-Related"/>
</dbReference>
<dbReference type="InterPro" id="IPR000758">
    <property type="entry name" value="Enterovir_OMP"/>
</dbReference>
<dbReference type="InterPro" id="IPR011250">
    <property type="entry name" value="OMP/PagP_b-brl"/>
</dbReference>
<dbReference type="InterPro" id="IPR027385">
    <property type="entry name" value="OMP_b-brl"/>
</dbReference>
<dbReference type="PANTHER" id="PTHR35892:SF2">
    <property type="entry name" value="OUTER MEMBRANE PROTEIN PAGN"/>
    <property type="match status" value="1"/>
</dbReference>
<dbReference type="PANTHER" id="PTHR35892">
    <property type="entry name" value="OUTER MEMBRANE PROTEIN PAGN-RELATED"/>
    <property type="match status" value="1"/>
</dbReference>
<dbReference type="Pfam" id="PF13505">
    <property type="entry name" value="OMP_b-brl"/>
    <property type="match status" value="1"/>
</dbReference>
<dbReference type="PRINTS" id="PR00316">
    <property type="entry name" value="ENTEROVIROMP"/>
</dbReference>
<dbReference type="SUPFAM" id="SSF56925">
    <property type="entry name" value="OMPA-like"/>
    <property type="match status" value="1"/>
</dbReference>
<dbReference type="PROSITE" id="PS00694">
    <property type="entry name" value="ENT_VIR_OMP_1"/>
    <property type="match status" value="1"/>
</dbReference>
<dbReference type="PROSITE" id="PS00695">
    <property type="entry name" value="ENT_VIR_OMP_2"/>
    <property type="match status" value="1"/>
</dbReference>
<sequence>MKKTLLASSLIACLSIASVNVYAASESSISIGYAQSHVKENGYTLDNDPKGFNLKYRYELDDNWGVIGSFAYTHQGYDFFYGSNKFGHGDVDYYSVTMGPSFRINEYVSLYGLLGAAHGKVKASVFDESISASKTSMAYGAGVQFNPLPNFVIDASYEYSKLDSIKVGTWMLGAGYRF</sequence>
<keyword id="KW-0998">Cell outer membrane</keyword>
<keyword id="KW-0903">Direct protein sequencing</keyword>
<keyword id="KW-0472">Membrane</keyword>
<keyword id="KW-0732">Signal</keyword>
<keyword id="KW-0812">Transmembrane</keyword>
<keyword id="KW-1134">Transmembrane beta strand</keyword>
<keyword id="KW-0843">Virulence</keyword>
<proteinExistence type="evidence at protein level"/>
<accession>P16454</accession>
<accession>Q9FCY3</accession>
<evidence type="ECO:0000250" key="1"/>
<evidence type="ECO:0000269" key="2">
    <source>
    </source>
</evidence>
<evidence type="ECO:0000305" key="3"/>
<protein>
    <recommendedName>
        <fullName>Attachment invasion locus protein</fullName>
    </recommendedName>
</protein>
<name>AIL_YEREN</name>
<organism>
    <name type="scientific">Yersinia enterocolitica</name>
    <dbReference type="NCBI Taxonomy" id="630"/>
    <lineage>
        <taxon>Bacteria</taxon>
        <taxon>Pseudomonadati</taxon>
        <taxon>Pseudomonadota</taxon>
        <taxon>Gammaproteobacteria</taxon>
        <taxon>Enterobacterales</taxon>
        <taxon>Yersiniaceae</taxon>
        <taxon>Yersinia</taxon>
    </lineage>
</organism>
<reference key="1">
    <citation type="journal article" date="1990" name="J. Bacteriol.">
        <title>Nucleotide sequence of the Yersinia enterocolitica ail gene and characterization of the Ail protein product.</title>
        <authorList>
            <person name="Miller V.L."/>
            <person name="Bliska J.B."/>
            <person name="Falkow S."/>
        </authorList>
    </citation>
    <scope>NUCLEOTIDE SEQUENCE [GENOMIC DNA]</scope>
    <scope>PROTEIN SEQUENCE OF 24-33</scope>
</reference>
<reference key="2">
    <citation type="submission" date="2000-07" db="EMBL/GenBank/DDBJ databases">
        <authorList>
            <person name="Gierczynski R."/>
            <person name="Jagielski M."/>
        </authorList>
    </citation>
    <scope>NUCLEOTIDE SEQUENCE [GENOMIC DNA] OF 20-160</scope>
</reference>
<feature type="signal peptide" evidence="2">
    <location>
        <begin position="1"/>
        <end position="23"/>
    </location>
</feature>
<feature type="chain" id="PRO_0000020197" description="Attachment invasion locus protein">
    <location>
        <begin position="24"/>
        <end position="178"/>
    </location>
</feature>
<feature type="sequence conflict" description="In Ref. 2; AAF97354." evidence="3" ref="2">
    <original>S</original>
    <variation>N</variation>
    <location>
        <position position="27"/>
    </location>
</feature>
<feature type="sequence conflict" description="In Ref. 2; AAF97354." evidence="3" ref="2">
    <original>V</original>
    <variation>L</variation>
    <location>
        <position position="91"/>
    </location>
</feature>
<feature type="sequence conflict" description="In Ref. 2; AAF97354." evidence="3" ref="2">
    <original>A</original>
    <variation>S</variation>
    <location>
        <position position="123"/>
    </location>
</feature>
<feature type="sequence conflict" description="In Ref. 2; AAF97354." evidence="3" ref="2">
    <original>E</original>
    <variation>G</variation>
    <location>
        <position position="128"/>
    </location>
</feature>
<feature type="sequence conflict" description="In Ref. 2; AAF97354." evidence="3" ref="2">
    <original>I</original>
    <variation>V</variation>
    <location>
        <position position="130"/>
    </location>
</feature>
<feature type="sequence conflict" description="In Ref. 2; AAF97354." evidence="3" ref="2">
    <original>A</original>
    <variation>T</variation>
    <location>
        <position position="132"/>
    </location>
</feature>
<gene>
    <name type="primary">ail</name>
</gene>
<comment type="function">
    <text>Promotes the invasion of pathogenic bacteria into eukaryotic cells by an unknown mechanism.</text>
</comment>
<comment type="subcellular location">
    <subcellularLocation>
        <location evidence="1">Cell outer membrane</location>
        <topology evidence="1">Multi-pass membrane protein</topology>
    </subcellularLocation>
</comment>
<comment type="similarity">
    <text evidence="3">Belongs to the outer membrane OOP (TC 1.B.6) superfamily. Ail family.</text>
</comment>